<keyword id="KW-0067">ATP-binding</keyword>
<keyword id="KW-0997">Cell inner membrane</keyword>
<keyword id="KW-1003">Cell membrane</keyword>
<keyword id="KW-0406">Ion transport</keyword>
<keyword id="KW-0408">Iron</keyword>
<keyword id="KW-0410">Iron transport</keyword>
<keyword id="KW-0472">Membrane</keyword>
<keyword id="KW-0547">Nucleotide-binding</keyword>
<keyword id="KW-1278">Translocase</keyword>
<keyword id="KW-0813">Transport</keyword>
<comment type="function">
    <text evidence="1">Part of the ABC transporter complex FbpABC involved in Fe(3+) ions import. Responsible for energy coupling to the transport system.</text>
</comment>
<comment type="catalytic activity">
    <reaction evidence="1">
        <text>Fe(3+)(out) + ATP + H2O = Fe(3+)(in) + ADP + phosphate + H(+)</text>
        <dbReference type="Rhea" id="RHEA:12332"/>
        <dbReference type="ChEBI" id="CHEBI:15377"/>
        <dbReference type="ChEBI" id="CHEBI:15378"/>
        <dbReference type="ChEBI" id="CHEBI:29034"/>
        <dbReference type="ChEBI" id="CHEBI:30616"/>
        <dbReference type="ChEBI" id="CHEBI:43474"/>
        <dbReference type="ChEBI" id="CHEBI:456216"/>
        <dbReference type="EC" id="7.2.2.7"/>
    </reaction>
</comment>
<comment type="subunit">
    <text evidence="1">The complex is composed of two ATP-binding proteins (FbpC), two transmembrane proteins (FbpB) and a solute-binding protein (FbpA).</text>
</comment>
<comment type="subcellular location">
    <subcellularLocation>
        <location evidence="1">Cell inner membrane</location>
        <topology evidence="1">Peripheral membrane protein</topology>
    </subcellularLocation>
</comment>
<comment type="similarity">
    <text evidence="1">Belongs to the ABC transporter superfamily. Fe(3+) ion importer (TC 3.A.1.10) family.</text>
</comment>
<organism>
    <name type="scientific">Yersinia pestis bv. Antiqua (strain Antiqua)</name>
    <dbReference type="NCBI Taxonomy" id="360102"/>
    <lineage>
        <taxon>Bacteria</taxon>
        <taxon>Pseudomonadati</taxon>
        <taxon>Pseudomonadota</taxon>
        <taxon>Gammaproteobacteria</taxon>
        <taxon>Enterobacterales</taxon>
        <taxon>Yersiniaceae</taxon>
        <taxon>Yersinia</taxon>
    </lineage>
</organism>
<proteinExistence type="inferred from homology"/>
<feature type="chain" id="PRO_0000272048" description="Fe(3+) ions import ATP-binding protein FbpC">
    <location>
        <begin position="1"/>
        <end position="349"/>
    </location>
</feature>
<feature type="domain" description="ABC transporter" evidence="1">
    <location>
        <begin position="4"/>
        <end position="236"/>
    </location>
</feature>
<feature type="binding site" evidence="1">
    <location>
        <begin position="36"/>
        <end position="43"/>
    </location>
    <ligand>
        <name>ATP</name>
        <dbReference type="ChEBI" id="CHEBI:30616"/>
    </ligand>
</feature>
<accession>Q1C607</accession>
<sequence>MSTLELHHIGKSYQSVMVLDRIDLHVPPGSRTAIVGPSGSGKTTLLRIIAGFETPDAGKVILQGKAMFDGTTYVPAHKRGIGFVPQDGALFPHFTVAGNIGYGLKGSQRDKERRINELMDMVALDRRLSALWPHEISGGQQQRVALARALAQRPVLMLLDEPFSALDTALRASTRKAVAELLSEANIASILVTHDQTEALSFADQVAVMRAGKLAHVGPPQELYLRPVDEPTATFLGETLMLTAQLGTGLAHCALGQVKVDNPHRRGEARIMLRPEQITLTPLRPEQYNAASCLAKVIAIDFAGFISTLTLQIISSGETIEIKTISREDLHVGLTVGLDIMGQAHIFAE</sequence>
<evidence type="ECO:0000255" key="1">
    <source>
        <dbReference type="HAMAP-Rule" id="MF_01706"/>
    </source>
</evidence>
<gene>
    <name evidence="1" type="primary">fbpC</name>
    <name type="ordered locus">YPA_2150</name>
</gene>
<name>FBPC_YERPA</name>
<protein>
    <recommendedName>
        <fullName evidence="1">Fe(3+) ions import ATP-binding protein FbpC</fullName>
        <ecNumber evidence="1">7.2.2.7</ecNumber>
    </recommendedName>
</protein>
<reference key="1">
    <citation type="journal article" date="2006" name="J. Bacteriol.">
        <title>Complete genome sequence of Yersinia pestis strains Antiqua and Nepal516: evidence of gene reduction in an emerging pathogen.</title>
        <authorList>
            <person name="Chain P.S.G."/>
            <person name="Hu P."/>
            <person name="Malfatti S.A."/>
            <person name="Radnedge L."/>
            <person name="Larimer F."/>
            <person name="Vergez L.M."/>
            <person name="Worsham P."/>
            <person name="Chu M.C."/>
            <person name="Andersen G.L."/>
        </authorList>
    </citation>
    <scope>NUCLEOTIDE SEQUENCE [LARGE SCALE GENOMIC DNA]</scope>
    <source>
        <strain>Antiqua</strain>
    </source>
</reference>
<dbReference type="EC" id="7.2.2.7" evidence="1"/>
<dbReference type="EMBL" id="CP000308">
    <property type="protein sequence ID" value="ABG14115.1"/>
    <property type="molecule type" value="Genomic_DNA"/>
</dbReference>
<dbReference type="RefSeq" id="WP_002211598.1">
    <property type="nucleotide sequence ID" value="NZ_CP009906.1"/>
</dbReference>
<dbReference type="SMR" id="Q1C607"/>
<dbReference type="KEGG" id="ypa:YPA_2150"/>
<dbReference type="Proteomes" id="UP000001971">
    <property type="component" value="Chromosome"/>
</dbReference>
<dbReference type="GO" id="GO:0005886">
    <property type="term" value="C:plasma membrane"/>
    <property type="evidence" value="ECO:0007669"/>
    <property type="project" value="UniProtKB-SubCell"/>
</dbReference>
<dbReference type="GO" id="GO:0015408">
    <property type="term" value="F:ABC-type ferric iron transporter activity"/>
    <property type="evidence" value="ECO:0007669"/>
    <property type="project" value="UniProtKB-EC"/>
</dbReference>
<dbReference type="GO" id="GO:0005524">
    <property type="term" value="F:ATP binding"/>
    <property type="evidence" value="ECO:0007669"/>
    <property type="project" value="UniProtKB-KW"/>
</dbReference>
<dbReference type="GO" id="GO:0016887">
    <property type="term" value="F:ATP hydrolysis activity"/>
    <property type="evidence" value="ECO:0007669"/>
    <property type="project" value="InterPro"/>
</dbReference>
<dbReference type="CDD" id="cd03259">
    <property type="entry name" value="ABC_Carb_Solutes_like"/>
    <property type="match status" value="1"/>
</dbReference>
<dbReference type="FunFam" id="3.40.50.300:FF:000425">
    <property type="entry name" value="Probable ABC transporter, ATP-binding subunit"/>
    <property type="match status" value="1"/>
</dbReference>
<dbReference type="Gene3D" id="2.40.50.450">
    <property type="match status" value="1"/>
</dbReference>
<dbReference type="Gene3D" id="3.40.50.300">
    <property type="entry name" value="P-loop containing nucleotide triphosphate hydrolases"/>
    <property type="match status" value="1"/>
</dbReference>
<dbReference type="InterPro" id="IPR003593">
    <property type="entry name" value="AAA+_ATPase"/>
</dbReference>
<dbReference type="InterPro" id="IPR050093">
    <property type="entry name" value="ABC_SmlMolc_Importer"/>
</dbReference>
<dbReference type="InterPro" id="IPR003439">
    <property type="entry name" value="ABC_transporter-like_ATP-bd"/>
</dbReference>
<dbReference type="InterPro" id="IPR017871">
    <property type="entry name" value="ABC_transporter-like_CS"/>
</dbReference>
<dbReference type="InterPro" id="IPR015853">
    <property type="entry name" value="ABC_transpr_FbpC"/>
</dbReference>
<dbReference type="InterPro" id="IPR008995">
    <property type="entry name" value="Mo/tungstate-bd_C_term_dom"/>
</dbReference>
<dbReference type="InterPro" id="IPR027417">
    <property type="entry name" value="P-loop_NTPase"/>
</dbReference>
<dbReference type="PANTHER" id="PTHR42781">
    <property type="entry name" value="SPERMIDINE/PUTRESCINE IMPORT ATP-BINDING PROTEIN POTA"/>
    <property type="match status" value="1"/>
</dbReference>
<dbReference type="PANTHER" id="PTHR42781:SF4">
    <property type="entry name" value="SPERMIDINE_PUTRESCINE IMPORT ATP-BINDING PROTEIN POTA"/>
    <property type="match status" value="1"/>
</dbReference>
<dbReference type="Pfam" id="PF00005">
    <property type="entry name" value="ABC_tran"/>
    <property type="match status" value="1"/>
</dbReference>
<dbReference type="SMART" id="SM00382">
    <property type="entry name" value="AAA"/>
    <property type="match status" value="1"/>
</dbReference>
<dbReference type="SUPFAM" id="SSF50331">
    <property type="entry name" value="MOP-like"/>
    <property type="match status" value="1"/>
</dbReference>
<dbReference type="SUPFAM" id="SSF52540">
    <property type="entry name" value="P-loop containing nucleoside triphosphate hydrolases"/>
    <property type="match status" value="1"/>
</dbReference>
<dbReference type="PROSITE" id="PS00211">
    <property type="entry name" value="ABC_TRANSPORTER_1"/>
    <property type="match status" value="1"/>
</dbReference>
<dbReference type="PROSITE" id="PS50893">
    <property type="entry name" value="ABC_TRANSPORTER_2"/>
    <property type="match status" value="1"/>
</dbReference>
<dbReference type="PROSITE" id="PS51242">
    <property type="entry name" value="FBPC"/>
    <property type="match status" value="1"/>
</dbReference>